<keyword id="KW-0071">Autoinducer synthesis</keyword>
<keyword id="KW-0408">Iron</keyword>
<keyword id="KW-0456">Lyase</keyword>
<keyword id="KW-0479">Metal-binding</keyword>
<keyword id="KW-0673">Quorum sensing</keyword>
<gene>
    <name evidence="2" type="primary">luxS</name>
    <name type="ordered locus">SPA2675</name>
</gene>
<evidence type="ECO:0000250" key="1"/>
<evidence type="ECO:0000255" key="2">
    <source>
        <dbReference type="HAMAP-Rule" id="MF_00091"/>
    </source>
</evidence>
<protein>
    <recommendedName>
        <fullName evidence="2">S-ribosylhomocysteine lyase</fullName>
        <ecNumber evidence="2">4.4.1.21</ecNumber>
    </recommendedName>
    <alternativeName>
        <fullName evidence="2">AI-2 synthesis protein</fullName>
    </alternativeName>
    <alternativeName>
        <fullName evidence="2">Autoinducer-2 production protein LuxS</fullName>
    </alternativeName>
</protein>
<proteinExistence type="inferred from homology"/>
<name>LUXS_SALPA</name>
<accession>Q5PF11</accession>
<reference key="1">
    <citation type="journal article" date="2004" name="Nat. Genet.">
        <title>Comparison of genome degradation in Paratyphi A and Typhi, human-restricted serovars of Salmonella enterica that cause typhoid.</title>
        <authorList>
            <person name="McClelland M."/>
            <person name="Sanderson K.E."/>
            <person name="Clifton S.W."/>
            <person name="Latreille P."/>
            <person name="Porwollik S."/>
            <person name="Sabo A."/>
            <person name="Meyer R."/>
            <person name="Bieri T."/>
            <person name="Ozersky P."/>
            <person name="McLellan M."/>
            <person name="Harkins C.R."/>
            <person name="Wang C."/>
            <person name="Nguyen C."/>
            <person name="Berghoff A."/>
            <person name="Elliott G."/>
            <person name="Kohlberg S."/>
            <person name="Strong C."/>
            <person name="Du F."/>
            <person name="Carter J."/>
            <person name="Kremizki C."/>
            <person name="Layman D."/>
            <person name="Leonard S."/>
            <person name="Sun H."/>
            <person name="Fulton L."/>
            <person name="Nash W."/>
            <person name="Miner T."/>
            <person name="Minx P."/>
            <person name="Delehaunty K."/>
            <person name="Fronick C."/>
            <person name="Magrini V."/>
            <person name="Nhan M."/>
            <person name="Warren W."/>
            <person name="Florea L."/>
            <person name="Spieth J."/>
            <person name="Wilson R.K."/>
        </authorList>
    </citation>
    <scope>NUCLEOTIDE SEQUENCE [LARGE SCALE GENOMIC DNA]</scope>
    <source>
        <strain>ATCC 9150 / SARB42</strain>
    </source>
</reference>
<organism>
    <name type="scientific">Salmonella paratyphi A (strain ATCC 9150 / SARB42)</name>
    <dbReference type="NCBI Taxonomy" id="295319"/>
    <lineage>
        <taxon>Bacteria</taxon>
        <taxon>Pseudomonadati</taxon>
        <taxon>Pseudomonadota</taxon>
        <taxon>Gammaproteobacteria</taxon>
        <taxon>Enterobacterales</taxon>
        <taxon>Enterobacteriaceae</taxon>
        <taxon>Salmonella</taxon>
    </lineage>
</organism>
<feature type="initiator methionine" description="Removed" evidence="1">
    <location>
        <position position="1"/>
    </location>
</feature>
<feature type="chain" id="PRO_0000172247" description="S-ribosylhomocysteine lyase">
    <location>
        <begin position="2"/>
        <end position="171"/>
    </location>
</feature>
<feature type="binding site" evidence="2">
    <location>
        <position position="54"/>
    </location>
    <ligand>
        <name>Fe cation</name>
        <dbReference type="ChEBI" id="CHEBI:24875"/>
    </ligand>
</feature>
<feature type="binding site" evidence="2">
    <location>
        <position position="58"/>
    </location>
    <ligand>
        <name>Fe cation</name>
        <dbReference type="ChEBI" id="CHEBI:24875"/>
    </ligand>
</feature>
<feature type="binding site" evidence="2">
    <location>
        <position position="128"/>
    </location>
    <ligand>
        <name>Fe cation</name>
        <dbReference type="ChEBI" id="CHEBI:24875"/>
    </ligand>
</feature>
<comment type="function">
    <text evidence="2">Involved in the synthesis of autoinducer 2 (AI-2) which is secreted by bacteria and is used to communicate both the cell density and the metabolic potential of the environment. The regulation of gene expression in response to changes in cell density is called quorum sensing. Catalyzes the transformation of S-ribosylhomocysteine (RHC) to homocysteine (HC) and 4,5-dihydroxy-2,3-pentadione (DPD).</text>
</comment>
<comment type="catalytic activity">
    <reaction evidence="2">
        <text>S-(5-deoxy-D-ribos-5-yl)-L-homocysteine = (S)-4,5-dihydroxypentane-2,3-dione + L-homocysteine</text>
        <dbReference type="Rhea" id="RHEA:17753"/>
        <dbReference type="ChEBI" id="CHEBI:29484"/>
        <dbReference type="ChEBI" id="CHEBI:58195"/>
        <dbReference type="ChEBI" id="CHEBI:58199"/>
        <dbReference type="EC" id="4.4.1.21"/>
    </reaction>
</comment>
<comment type="cofactor">
    <cofactor evidence="2">
        <name>Fe cation</name>
        <dbReference type="ChEBI" id="CHEBI:24875"/>
    </cofactor>
    <text evidence="2">Binds 1 Fe cation per subunit.</text>
</comment>
<comment type="subunit">
    <text evidence="2">Homodimer.</text>
</comment>
<comment type="similarity">
    <text evidence="2">Belongs to the LuxS family.</text>
</comment>
<dbReference type="EC" id="4.4.1.21" evidence="2"/>
<dbReference type="EMBL" id="CP000026">
    <property type="protein sequence ID" value="AAV78537.1"/>
    <property type="molecule type" value="Genomic_DNA"/>
</dbReference>
<dbReference type="RefSeq" id="WP_001130194.1">
    <property type="nucleotide sequence ID" value="NC_006511.1"/>
</dbReference>
<dbReference type="SMR" id="Q5PF11"/>
<dbReference type="KEGG" id="spt:SPA2675"/>
<dbReference type="HOGENOM" id="CLU_107531_2_0_6"/>
<dbReference type="Proteomes" id="UP000008185">
    <property type="component" value="Chromosome"/>
</dbReference>
<dbReference type="GO" id="GO:0005506">
    <property type="term" value="F:iron ion binding"/>
    <property type="evidence" value="ECO:0007669"/>
    <property type="project" value="InterPro"/>
</dbReference>
<dbReference type="GO" id="GO:0043768">
    <property type="term" value="F:S-ribosylhomocysteine lyase activity"/>
    <property type="evidence" value="ECO:0007669"/>
    <property type="project" value="UniProtKB-UniRule"/>
</dbReference>
<dbReference type="GO" id="GO:0009372">
    <property type="term" value="P:quorum sensing"/>
    <property type="evidence" value="ECO:0007669"/>
    <property type="project" value="UniProtKB-UniRule"/>
</dbReference>
<dbReference type="FunFam" id="3.30.1360.80:FF:000001">
    <property type="entry name" value="S-ribosylhomocysteine lyase"/>
    <property type="match status" value="1"/>
</dbReference>
<dbReference type="Gene3D" id="3.30.1360.80">
    <property type="entry name" value="S-ribosylhomocysteinase (LuxS)"/>
    <property type="match status" value="1"/>
</dbReference>
<dbReference type="HAMAP" id="MF_00091">
    <property type="entry name" value="LuxS"/>
    <property type="match status" value="1"/>
</dbReference>
<dbReference type="InterPro" id="IPR037005">
    <property type="entry name" value="LuxS_sf"/>
</dbReference>
<dbReference type="InterPro" id="IPR011249">
    <property type="entry name" value="Metalloenz_LuxS/M16"/>
</dbReference>
<dbReference type="InterPro" id="IPR003815">
    <property type="entry name" value="S-ribosylhomocysteinase"/>
</dbReference>
<dbReference type="NCBIfam" id="NF002602">
    <property type="entry name" value="PRK02260.1-2"/>
    <property type="match status" value="1"/>
</dbReference>
<dbReference type="PANTHER" id="PTHR35799">
    <property type="entry name" value="S-RIBOSYLHOMOCYSTEINE LYASE"/>
    <property type="match status" value="1"/>
</dbReference>
<dbReference type="PANTHER" id="PTHR35799:SF1">
    <property type="entry name" value="S-RIBOSYLHOMOCYSTEINE LYASE"/>
    <property type="match status" value="1"/>
</dbReference>
<dbReference type="Pfam" id="PF02664">
    <property type="entry name" value="LuxS"/>
    <property type="match status" value="1"/>
</dbReference>
<dbReference type="PIRSF" id="PIRSF006160">
    <property type="entry name" value="AI2"/>
    <property type="match status" value="1"/>
</dbReference>
<dbReference type="PRINTS" id="PR01487">
    <property type="entry name" value="LUXSPROTEIN"/>
</dbReference>
<dbReference type="SUPFAM" id="SSF63411">
    <property type="entry name" value="LuxS/MPP-like metallohydrolase"/>
    <property type="match status" value="1"/>
</dbReference>
<sequence>MPLLDSFAVDHTRMQAPAVRVAKTMNTPHGDAITVFDLRFCIPNKEVMPEKGIHTLEHLFAGFMRDHLNGNGVEIIDISPMGCRTGFYMSLIGTPDEQRVADAWKAAMADVLKVQDQNQIPELNVYQCGTYQMHSLSEAQDIARHILERDVRVNSNKELALPKEKLQELHI</sequence>